<reference key="1">
    <citation type="journal article" date="2010" name="BMC Genomics">
        <title>A genomic perspective on the potential of Actinobacillus succinogenes for industrial succinate production.</title>
        <authorList>
            <person name="McKinlay J.B."/>
            <person name="Laivenieks M."/>
            <person name="Schindler B.D."/>
            <person name="McKinlay A.A."/>
            <person name="Siddaramappa S."/>
            <person name="Challacombe J.F."/>
            <person name="Lowry S.R."/>
            <person name="Clum A."/>
            <person name="Lapidus A.L."/>
            <person name="Burkhart K.B."/>
            <person name="Harkins V."/>
            <person name="Vieille C."/>
        </authorList>
    </citation>
    <scope>NUCLEOTIDE SEQUENCE [LARGE SCALE GENOMIC DNA]</scope>
    <source>
        <strain>ATCC 55618 / DSM 22257 / CCUG 43843 / 130Z</strain>
    </source>
</reference>
<feature type="chain" id="PRO_1000072307" description="Na(+)-translocating NADH-quinone reductase subunit A">
    <location>
        <begin position="1"/>
        <end position="443"/>
    </location>
</feature>
<accession>A6VLX6</accession>
<protein>
    <recommendedName>
        <fullName evidence="1">Na(+)-translocating NADH-quinone reductase subunit A</fullName>
        <shortName evidence="1">Na(+)-NQR subunit A</shortName>
        <shortName evidence="1">Na(+)-translocating NQR subunit A</shortName>
        <ecNumber evidence="1">7.2.1.1</ecNumber>
    </recommendedName>
    <alternativeName>
        <fullName evidence="1">NQR complex subunit A</fullName>
    </alternativeName>
    <alternativeName>
        <fullName evidence="1">NQR-1 subunit A</fullName>
    </alternativeName>
</protein>
<evidence type="ECO:0000255" key="1">
    <source>
        <dbReference type="HAMAP-Rule" id="MF_00425"/>
    </source>
</evidence>
<keyword id="KW-0406">Ion transport</keyword>
<keyword id="KW-0520">NAD</keyword>
<keyword id="KW-1185">Reference proteome</keyword>
<keyword id="KW-0915">Sodium</keyword>
<keyword id="KW-0739">Sodium transport</keyword>
<keyword id="KW-1278">Translocase</keyword>
<keyword id="KW-0813">Transport</keyword>
<keyword id="KW-0830">Ubiquinone</keyword>
<proteinExistence type="inferred from homology"/>
<name>NQRA_ACTSZ</name>
<organism>
    <name type="scientific">Actinobacillus succinogenes (strain ATCC 55618 / DSM 22257 / CCUG 43843 / 130Z)</name>
    <dbReference type="NCBI Taxonomy" id="339671"/>
    <lineage>
        <taxon>Bacteria</taxon>
        <taxon>Pseudomonadati</taxon>
        <taxon>Pseudomonadota</taxon>
        <taxon>Gammaproteobacteria</taxon>
        <taxon>Pasteurellales</taxon>
        <taxon>Pasteurellaceae</taxon>
        <taxon>Actinobacillus</taxon>
    </lineage>
</organism>
<sequence length="443" mass="48022">MITIKKGLDLPIAGKPEQVIRDGNAVTEVAMLGEEYVGMRPSMKVREGDTVKKGQVLFEDKKNPGVVFTAPASGTVTAINRGAKRVLQSVVIRVGGNEQVTFEKYDVAALNQLTGEQVRRNLQASGLWTALRTRPFSKVPAIDAVPSSIFVNAMDSNPLAADPAVIINEYAEDFTNGLTVLTRLHDKVNLVKSAGSNITAVGAVKVHEFGGKHPAGLVGTHIHFIDPVSLTKTVWHLNYQDVIAIGKLFTTGELFVERVVSLAGPQVKNPRLVRTVSGANLTQLTENELNAGENRVISGSVLYGAKAEGPHNYLGRYALQVSVLAEDTEKEFFGWISPQANKFSITRTVLGHFGKKLFNFTTAENGGHRAMVPIGSYERVMPLDILPTLLLRDLEVGDTDSAQSLGCLELDEEDLALCTFVDPGKADYGSFLRQALDKIEKEG</sequence>
<gene>
    <name evidence="1" type="primary">nqrA</name>
    <name type="ordered locus">Asuc_0599</name>
</gene>
<dbReference type="EC" id="7.2.1.1" evidence="1"/>
<dbReference type="EMBL" id="CP000746">
    <property type="protein sequence ID" value="ABR73973.1"/>
    <property type="molecule type" value="Genomic_DNA"/>
</dbReference>
<dbReference type="RefSeq" id="WP_012072353.1">
    <property type="nucleotide sequence ID" value="NC_009655.1"/>
</dbReference>
<dbReference type="SMR" id="A6VLX6"/>
<dbReference type="STRING" id="339671.Asuc_0599"/>
<dbReference type="KEGG" id="asu:Asuc_0599"/>
<dbReference type="eggNOG" id="COG1726">
    <property type="taxonomic scope" value="Bacteria"/>
</dbReference>
<dbReference type="HOGENOM" id="CLU_046656_0_0_6"/>
<dbReference type="OrthoDB" id="9774536at2"/>
<dbReference type="Proteomes" id="UP000001114">
    <property type="component" value="Chromosome"/>
</dbReference>
<dbReference type="GO" id="GO:0016655">
    <property type="term" value="F:oxidoreductase activity, acting on NAD(P)H, quinone or similar compound as acceptor"/>
    <property type="evidence" value="ECO:0007669"/>
    <property type="project" value="UniProtKB-UniRule"/>
</dbReference>
<dbReference type="GO" id="GO:0006814">
    <property type="term" value="P:sodium ion transport"/>
    <property type="evidence" value="ECO:0007669"/>
    <property type="project" value="UniProtKB-UniRule"/>
</dbReference>
<dbReference type="Gene3D" id="2.40.50.100">
    <property type="match status" value="1"/>
</dbReference>
<dbReference type="HAMAP" id="MF_00425">
    <property type="entry name" value="NqrA"/>
    <property type="match status" value="1"/>
</dbReference>
<dbReference type="InterPro" id="IPR008703">
    <property type="entry name" value="NqrA"/>
</dbReference>
<dbReference type="InterPro" id="IPR056148">
    <property type="entry name" value="NQRA_2nd"/>
</dbReference>
<dbReference type="InterPro" id="IPR022615">
    <property type="entry name" value="NqrA_C_domain"/>
</dbReference>
<dbReference type="InterPro" id="IPR056147">
    <property type="entry name" value="NQRA_N"/>
</dbReference>
<dbReference type="NCBIfam" id="TIGR01936">
    <property type="entry name" value="nqrA"/>
    <property type="match status" value="1"/>
</dbReference>
<dbReference type="NCBIfam" id="NF003759">
    <property type="entry name" value="PRK05352.1-2"/>
    <property type="match status" value="1"/>
</dbReference>
<dbReference type="PANTHER" id="PTHR37839">
    <property type="entry name" value="NA(+)-TRANSLOCATING NADH-QUINONE REDUCTASE SUBUNIT A"/>
    <property type="match status" value="1"/>
</dbReference>
<dbReference type="PANTHER" id="PTHR37839:SF1">
    <property type="entry name" value="NA(+)-TRANSLOCATING NADH-QUINONE REDUCTASE SUBUNIT A"/>
    <property type="match status" value="1"/>
</dbReference>
<dbReference type="Pfam" id="PF24836">
    <property type="entry name" value="NQRA_2nd"/>
    <property type="match status" value="1"/>
</dbReference>
<dbReference type="Pfam" id="PF05896">
    <property type="entry name" value="NQRA_N"/>
    <property type="match status" value="1"/>
</dbReference>
<dbReference type="Pfam" id="PF11973">
    <property type="entry name" value="NQRA_SLBB"/>
    <property type="match status" value="1"/>
</dbReference>
<comment type="function">
    <text evidence="1">NQR complex catalyzes the reduction of ubiquinone-1 to ubiquinol by two successive reactions, coupled with the transport of Na(+) ions from the cytoplasm to the periplasm. NqrA to NqrE are probably involved in the second step, the conversion of ubisemiquinone to ubiquinol.</text>
</comment>
<comment type="catalytic activity">
    <reaction evidence="1">
        <text>a ubiquinone + n Na(+)(in) + NADH + H(+) = a ubiquinol + n Na(+)(out) + NAD(+)</text>
        <dbReference type="Rhea" id="RHEA:47748"/>
        <dbReference type="Rhea" id="RHEA-COMP:9565"/>
        <dbReference type="Rhea" id="RHEA-COMP:9566"/>
        <dbReference type="ChEBI" id="CHEBI:15378"/>
        <dbReference type="ChEBI" id="CHEBI:16389"/>
        <dbReference type="ChEBI" id="CHEBI:17976"/>
        <dbReference type="ChEBI" id="CHEBI:29101"/>
        <dbReference type="ChEBI" id="CHEBI:57540"/>
        <dbReference type="ChEBI" id="CHEBI:57945"/>
        <dbReference type="EC" id="7.2.1.1"/>
    </reaction>
</comment>
<comment type="subunit">
    <text evidence="1">Composed of six subunits; NqrA, NqrB, NqrC, NqrD, NqrE and NqrF.</text>
</comment>
<comment type="similarity">
    <text evidence="1">Belongs to the NqrA family.</text>
</comment>